<feature type="chain" id="PRO_0000394443" description="Snake venom serine protease rhinocerase">
    <location>
        <begin position="1"/>
        <end position="89" status="greater than"/>
    </location>
</feature>
<feature type="domain" description="Peptidase S1" evidence="2">
    <location>
        <begin position="1"/>
        <end position="89" status="greater than"/>
    </location>
</feature>
<feature type="active site" description="Charge relay system" evidence="1 2 3 4">
    <location>
        <position position="45"/>
    </location>
</feature>
<feature type="disulfide bond" evidence="1 2">
    <location>
        <begin position="7"/>
        <end status="unknown"/>
    </location>
</feature>
<feature type="disulfide bond" evidence="1 2">
    <location>
        <begin position="27"/>
        <end status="unknown"/>
    </location>
</feature>
<feature type="disulfide bond" evidence="1 2">
    <location>
        <begin status="unknown"/>
        <end position="53"/>
    </location>
</feature>
<feature type="disulfide bond" evidence="1 2">
    <location>
        <begin position="64"/>
        <end position="69"/>
    </location>
</feature>
<feature type="non-consecutive residues" evidence="8">
    <location>
        <begin position="37"/>
        <end position="38"/>
    </location>
</feature>
<feature type="non-consecutive residues" evidence="8">
    <location>
        <begin position="50"/>
        <end position="51"/>
    </location>
</feature>
<feature type="non-consecutive residues" evidence="8">
    <location>
        <begin position="66"/>
        <end position="67"/>
    </location>
</feature>
<feature type="non-terminal residue" evidence="8">
    <location>
        <position position="89"/>
    </location>
</feature>
<protein>
    <recommendedName>
        <fullName evidence="7">Snake venom serine protease rhinocerase</fullName>
        <shortName evidence="7">SVSP rhinocerase</shortName>
        <ecNumber>3.4.21.-</ecNumber>
    </recommendedName>
    <alternativeName>
        <fullName evidence="8">Rhinocerase 1</fullName>
    </alternativeName>
</protein>
<accession>P86497</accession>
<keyword id="KW-0903">Direct protein sequencing</keyword>
<keyword id="KW-1015">Disulfide bond</keyword>
<keyword id="KW-1205">Fibrinolytic toxin</keyword>
<keyword id="KW-0325">Glycoprotein</keyword>
<keyword id="KW-1199">Hemostasis impairing toxin</keyword>
<keyword id="KW-0378">Hydrolase</keyword>
<keyword id="KW-0382">Hypotensive agent</keyword>
<keyword id="KW-0645">Protease</keyword>
<keyword id="KW-0964">Secreted</keyword>
<keyword id="KW-0720">Serine protease</keyword>
<keyword id="KW-0800">Toxin</keyword>
<sequence length="89" mass="9978">VIGGAECDINEHPSLALIYSTSMRFHCAGTLLNQEWVSFTMWDKDIMLIRTLCAGVLEGGKDTCLAHPCAQPLLPAFYTKVFDYIPWIK</sequence>
<evidence type="ECO:0000250" key="1">
    <source>
        <dbReference type="UniProtKB" id="P09872"/>
    </source>
</evidence>
<evidence type="ECO:0000255" key="2">
    <source>
        <dbReference type="PROSITE-ProRule" id="PRU00274"/>
    </source>
</evidence>
<evidence type="ECO:0000255" key="3">
    <source>
        <dbReference type="PROSITE-ProRule" id="PRU10078"/>
    </source>
</evidence>
<evidence type="ECO:0000255" key="4">
    <source>
        <dbReference type="PROSITE-ProRule" id="PRU10079"/>
    </source>
</evidence>
<evidence type="ECO:0000269" key="5">
    <source>
    </source>
</evidence>
<evidence type="ECO:0000269" key="6">
    <source>
    </source>
</evidence>
<evidence type="ECO:0000303" key="7">
    <source>
    </source>
</evidence>
<evidence type="ECO:0000305" key="8"/>
<evidence type="ECO:0000305" key="9">
    <source>
    </source>
</evidence>
<evidence type="ECO:0000305" key="10">
    <source>
    </source>
</evidence>
<name>VSPR1_BITRH</name>
<reference key="1">
    <citation type="journal article" date="2010" name="PLoS ONE">
        <title>Purification and functional characterisation of rhinocerase, a novel serine protease from the venom of Bitis gabonica rhinoceros.</title>
        <authorList>
            <person name="Vaiyapuri S."/>
            <person name="Harrison R.A."/>
            <person name="Bicknell A.B."/>
            <person name="Gibbins J.M."/>
            <person name="Hutchinson G."/>
        </authorList>
    </citation>
    <scope>PROTEIN SEQUENCE</scope>
    <scope>FUNCTION</scope>
    <scope>ACTIVITY REGULATION</scope>
    <scope>BIOPHYSICOCHEMICAL PROPERTIES</scope>
    <scope>SUBCELLULAR LOCATION</scope>
    <scope>GLYCOSYLATION</scope>
    <source>
        <tissue>Venom</tissue>
    </source>
</reference>
<reference key="2">
    <citation type="journal article" date="2007" name="J. Proteome Res.">
        <title>Snake venomics of Bitis species reveals large intragenus venom toxin composition variation: application to taxonomy of congeneric taxa.</title>
        <authorList>
            <person name="Calvete J.J."/>
            <person name="Escolano J."/>
            <person name="Sanz L."/>
        </authorList>
    </citation>
    <scope>PROTEIN SEQUENCE OF 1-15</scope>
    <scope>SUBCELLULAR LOCATION</scope>
    <source>
        <tissue>Venom</tissue>
    </source>
</reference>
<proteinExistence type="evidence at protein level"/>
<dbReference type="EC" id="3.4.21.-"/>
<dbReference type="SMR" id="P86497"/>
<dbReference type="GO" id="GO:0005576">
    <property type="term" value="C:extracellular region"/>
    <property type="evidence" value="ECO:0007669"/>
    <property type="project" value="UniProtKB-SubCell"/>
</dbReference>
<dbReference type="GO" id="GO:0008236">
    <property type="term" value="F:serine-type peptidase activity"/>
    <property type="evidence" value="ECO:0007669"/>
    <property type="project" value="UniProtKB-KW"/>
</dbReference>
<dbReference type="GO" id="GO:0090729">
    <property type="term" value="F:toxin activity"/>
    <property type="evidence" value="ECO:0007669"/>
    <property type="project" value="UniProtKB-KW"/>
</dbReference>
<dbReference type="GO" id="GO:0006508">
    <property type="term" value="P:proteolysis"/>
    <property type="evidence" value="ECO:0007669"/>
    <property type="project" value="UniProtKB-KW"/>
</dbReference>
<dbReference type="GO" id="GO:0008217">
    <property type="term" value="P:regulation of blood pressure"/>
    <property type="evidence" value="ECO:0007669"/>
    <property type="project" value="UniProtKB-KW"/>
</dbReference>
<dbReference type="Gene3D" id="2.40.10.10">
    <property type="entry name" value="Trypsin-like serine proteases"/>
    <property type="match status" value="1"/>
</dbReference>
<dbReference type="InterPro" id="IPR009003">
    <property type="entry name" value="Peptidase_S1_PA"/>
</dbReference>
<dbReference type="InterPro" id="IPR043504">
    <property type="entry name" value="Peptidase_S1_PA_chymotrypsin"/>
</dbReference>
<dbReference type="SUPFAM" id="SSF50494">
    <property type="entry name" value="Trypsin-like serine proteases"/>
    <property type="match status" value="1"/>
</dbReference>
<comment type="function">
    <text evidence="6">Snake venom serine protease that cleaves fibrinogen alpha and beta chains (FGA and FGB), but not gamma chains. Exhibits fibrinolytic and kininogenolytic. Preferentially cleaves after Arg and Lys residues.</text>
</comment>
<comment type="activity regulation">
    <text evidence="6">Inhibited by PMSF. Not inhibited by benzamidine.</text>
</comment>
<comment type="biophysicochemical properties">
    <kinetics>
        <KM evidence="6">80.05 uM for Arg-AMC</KM>
        <KM evidence="6">20.29 uM for Ala-Leu-Lys-AMC</KM>
        <KM evidence="6">32.19 uM for Ala-Leu-Arg-AMC</KM>
    </kinetics>
    <phDependence>
        <text evidence="6">Optimum pH is 7.4.</text>
    </phDependence>
    <temperatureDependence>
        <text evidence="6">Optimum temperature is 37 degrees Celsius.</text>
    </temperatureDependence>
</comment>
<comment type="subcellular location">
    <subcellularLocation>
        <location evidence="5 6">Secreted</location>
    </subcellularLocation>
</comment>
<comment type="tissue specificity">
    <text evidence="9 10">Expressed by the venom gland.</text>
</comment>
<comment type="PTM">
    <text evidence="6">Glycosylated.</text>
</comment>
<comment type="miscellaneous">
    <text>Negative results: does not have clotting activities. Does not stimulate platelet aggregation. Does not act on plasminogen (PubMed:20300193).</text>
</comment>
<comment type="similarity">
    <text evidence="8">Belongs to the peptidase S1 family. Snake venom subfamily.</text>
</comment>
<organism>
    <name type="scientific">Bitis rhinoceros</name>
    <name type="common">West African gaboon viper</name>
    <name type="synonym">Vipera rhinoceros</name>
    <dbReference type="NCBI Taxonomy" id="715877"/>
    <lineage>
        <taxon>Eukaryota</taxon>
        <taxon>Metazoa</taxon>
        <taxon>Chordata</taxon>
        <taxon>Craniata</taxon>
        <taxon>Vertebrata</taxon>
        <taxon>Euteleostomi</taxon>
        <taxon>Lepidosauria</taxon>
        <taxon>Squamata</taxon>
        <taxon>Bifurcata</taxon>
        <taxon>Unidentata</taxon>
        <taxon>Episquamata</taxon>
        <taxon>Toxicofera</taxon>
        <taxon>Serpentes</taxon>
        <taxon>Colubroidea</taxon>
        <taxon>Viperidae</taxon>
        <taxon>Viperinae</taxon>
        <taxon>Bitis</taxon>
    </lineage>
</organism>